<accession>Q8V6W3</accession>
<accession>Q9DR78</accession>
<accession>Q9QAR2</accession>
<sequence>MDIWKPEIKYLRYTNGFNVSELEDACFKFNYKFPKVGYCRVPSHAWCRNQGSFCATLTLYGKSKHYDKYFGVITGFTAFANTVEEAVNKLVFLAVDFITWRRQELNVYG</sequence>
<name>NS12_CVBQ</name>
<feature type="chain" id="PRO_0000283954" description="Non-structural protein of 12.7 kDa">
    <location>
        <begin position="1"/>
        <end position="109"/>
    </location>
</feature>
<feature type="sequence variant" description="In strain: Isolate Yoo.">
    <original>K</original>
    <variation>R</variation>
    <location>
        <position position="5"/>
    </location>
</feature>
<feature type="sequence variant" description="In strain: Isolate BCQ.7373.">
    <original>S</original>
    <variation>I</variation>
    <location>
        <position position="43"/>
    </location>
</feature>
<feature type="sequence variant" description="In strain: Isolate Yoo.">
    <original>A</original>
    <variation>V</variation>
    <location>
        <position position="45"/>
    </location>
</feature>
<feature type="sequence variant" description="In strain: Isolate Yoo.">
    <original>VEEAV</original>
    <variation>ARGGC</variation>
    <location>
        <begin position="83"/>
        <end position="87"/>
    </location>
</feature>
<feature type="sequence variant" description="In strain: Isolate Yoo.">
    <location>
        <begin position="87"/>
        <end position="109"/>
    </location>
</feature>
<dbReference type="EMBL" id="AF239312">
    <property type="protein sequence ID" value="AAG40608.1"/>
    <property type="molecule type" value="Genomic_RNA"/>
</dbReference>
<dbReference type="EMBL" id="AH010256">
    <property type="protein sequence ID" value="AAK01074.1"/>
    <property type="molecule type" value="Genomic_RNA"/>
</dbReference>
<dbReference type="EMBL" id="AH010061">
    <property type="protein sequence ID" value="AAG40598.1"/>
    <property type="molecule type" value="Genomic_RNA"/>
</dbReference>
<dbReference type="EMBL" id="AH010363">
    <property type="protein sequence ID" value="AAK01078.1"/>
    <property type="molecule type" value="Genomic_RNA"/>
</dbReference>
<dbReference type="EMBL" id="AH010062">
    <property type="protein sequence ID" value="AAG40604.1"/>
    <property type="molecule type" value="Genomic_RNA"/>
</dbReference>
<dbReference type="EMBL" id="AF220295">
    <property type="protein sequence ID" value="AAL40403.1"/>
    <property type="molecule type" value="Genomic_RNA"/>
</dbReference>
<dbReference type="RefSeq" id="NP_150080.1">
    <property type="nucleotide sequence ID" value="NC_003045.1"/>
</dbReference>
<dbReference type="KEGG" id="vg:1724647"/>
<dbReference type="Proteomes" id="UP000008572">
    <property type="component" value="Genome"/>
</dbReference>
<dbReference type="InterPro" id="IPR006841">
    <property type="entry name" value="Corona_NS2"/>
</dbReference>
<dbReference type="Pfam" id="PF04753">
    <property type="entry name" value="Corona_NS12-7"/>
    <property type="match status" value="1"/>
</dbReference>
<gene>
    <name type="ORF">5a</name>
</gene>
<evidence type="ECO:0000305" key="1"/>
<proteinExistence type="inferred from homology"/>
<organismHost>
    <name type="scientific">Bos taurus</name>
    <name type="common">Bovine</name>
    <dbReference type="NCBI Taxonomy" id="9913"/>
</organismHost>
<organism>
    <name type="scientific">Bovine coronavirus (strain Quebec)</name>
    <name type="common">BCoV</name>
    <name type="synonym">BCV</name>
    <dbReference type="NCBI Taxonomy" id="11133"/>
    <lineage>
        <taxon>Viruses</taxon>
        <taxon>Riboviria</taxon>
        <taxon>Orthornavirae</taxon>
        <taxon>Pisuviricota</taxon>
        <taxon>Pisoniviricetes</taxon>
        <taxon>Nidovirales</taxon>
        <taxon>Cornidovirineae</taxon>
        <taxon>Coronaviridae</taxon>
        <taxon>Orthocoronavirinae</taxon>
        <taxon>Betacoronavirus</taxon>
        <taxon>Embecovirus</taxon>
        <taxon>Betacoronavirus 1</taxon>
    </lineage>
</organism>
<protein>
    <recommendedName>
        <fullName>Non-structural protein of 12.7 kDa</fullName>
        <shortName>ns12.7</shortName>
    </recommendedName>
    <alternativeName>
        <fullName>12.7 kDa accessory protein</fullName>
    </alternativeName>
</protein>
<reference key="1">
    <citation type="journal article" date="2001" name="Virus Res.">
        <title>Bovine coronaviruses associated with enteric and respiratory diseases in Canadian dairy cattle display different reactivities to anti-HE monoclonal antibodies and distinct amino acid changes in their HE, S and ns4.9 protein.</title>
        <authorList>
            <person name="Gelinas A.-M."/>
            <person name="Boutin M."/>
            <person name="Sasseville A.M.-J."/>
            <person name="Dea S."/>
        </authorList>
    </citation>
    <scope>NUCLEOTIDE SEQUENCE [GENOMIC RNA]</scope>
    <source>
        <strain>Isolate BCQ.1523</strain>
        <strain>Isolate BCQ.2590</strain>
        <strain>Isolate BCQ.3994</strain>
        <strain>Isolate BCQ.571</strain>
        <strain>Isolate BCQ.7373</strain>
    </source>
</reference>
<reference key="2">
    <citation type="journal article" date="2001" name="Adv. Exp. Med. Biol.">
        <title>Full-length genomic sequence of bovine coronavirus (31 kb). Completion of the open reading frame 1a/1b sequences.</title>
        <authorList>
            <person name="Yoo D."/>
            <person name="Pei Y."/>
        </authorList>
    </citation>
    <scope>NUCLEOTIDE SEQUENCE [GENOMIC RNA]</scope>
    <source>
        <strain>Isolate Yoo</strain>
    </source>
</reference>
<comment type="similarity">
    <text evidence="1">Belongs to the coronaviruses ns12.7 protein family.</text>
</comment>